<sequence length="177" mass="20646">MLSYGKPFNFQRWIDEHVHLLKPPVGNQQVWQDSDFIVTVVGGPNRRTDYHDDPLEEFFYQLRGNAYLNLWIDGKRERVELKEGDVFLLPPHVRHSPQRPESGSACLVIERQRPEGTVDGFEWYCDACGERVHRVELQLKSIVNDLPPLFDAFYESEEKRRCPRCGVVHPGKQGRTD</sequence>
<gene>
    <name evidence="1" type="primary">nbaC</name>
    <name type="ordered locus">BceJ2315_55670</name>
    <name type="ORF">BCAM2130</name>
</gene>
<reference key="1">
    <citation type="journal article" date="2009" name="J. Bacteriol.">
        <title>The genome of Burkholderia cenocepacia J2315, an epidemic pathogen of cystic fibrosis patients.</title>
        <authorList>
            <person name="Holden M.T."/>
            <person name="Seth-Smith H.M."/>
            <person name="Crossman L.C."/>
            <person name="Sebaihia M."/>
            <person name="Bentley S.D."/>
            <person name="Cerdeno-Tarraga A.M."/>
            <person name="Thomson N.R."/>
            <person name="Bason N."/>
            <person name="Quail M.A."/>
            <person name="Sharp S."/>
            <person name="Cherevach I."/>
            <person name="Churcher C."/>
            <person name="Goodhead I."/>
            <person name="Hauser H."/>
            <person name="Holroyd N."/>
            <person name="Mungall K."/>
            <person name="Scott P."/>
            <person name="Walker D."/>
            <person name="White B."/>
            <person name="Rose H."/>
            <person name="Iversen P."/>
            <person name="Mil-Homens D."/>
            <person name="Rocha E.P."/>
            <person name="Fialho A.M."/>
            <person name="Baldwin A."/>
            <person name="Dowson C."/>
            <person name="Barrell B.G."/>
            <person name="Govan J.R."/>
            <person name="Vandamme P."/>
            <person name="Hart C.A."/>
            <person name="Mahenthiralingam E."/>
            <person name="Parkhill J."/>
        </authorList>
    </citation>
    <scope>NUCLEOTIDE SEQUENCE [LARGE SCALE GENOMIC DNA]</scope>
    <source>
        <strain>ATCC BAA-245 / DSM 16553 / LMG 16656 / NCTC 13227 / J2315 / CF5610</strain>
    </source>
</reference>
<name>3HAO_BURCJ</name>
<proteinExistence type="inferred from homology"/>
<protein>
    <recommendedName>
        <fullName evidence="1">3-hydroxyanthranilate 3,4-dioxygenase</fullName>
        <ecNumber evidence="1">1.13.11.6</ecNumber>
    </recommendedName>
    <alternativeName>
        <fullName evidence="1">3-hydroxyanthranilate oxygenase</fullName>
        <shortName evidence="1">3-HAO</shortName>
    </alternativeName>
    <alternativeName>
        <fullName evidence="1">3-hydroxyanthranilic acid dioxygenase</fullName>
        <shortName evidence="1">HAD</shortName>
    </alternativeName>
</protein>
<keyword id="KW-0223">Dioxygenase</keyword>
<keyword id="KW-0408">Iron</keyword>
<keyword id="KW-0479">Metal-binding</keyword>
<keyword id="KW-0560">Oxidoreductase</keyword>
<keyword id="KW-0662">Pyridine nucleotide biosynthesis</keyword>
<feature type="chain" id="PRO_1000134548" description="3-hydroxyanthranilate 3,4-dioxygenase">
    <location>
        <begin position="1"/>
        <end position="177"/>
    </location>
</feature>
<feature type="binding site" evidence="1">
    <location>
        <position position="47"/>
    </location>
    <ligand>
        <name>O2</name>
        <dbReference type="ChEBI" id="CHEBI:15379"/>
    </ligand>
</feature>
<feature type="binding site" evidence="1">
    <location>
        <position position="51"/>
    </location>
    <ligand>
        <name>Fe cation</name>
        <dbReference type="ChEBI" id="CHEBI:24875"/>
        <label>1</label>
        <note>catalytic</note>
    </ligand>
</feature>
<feature type="binding site" evidence="1">
    <location>
        <position position="57"/>
    </location>
    <ligand>
        <name>Fe cation</name>
        <dbReference type="ChEBI" id="CHEBI:24875"/>
        <label>1</label>
        <note>catalytic</note>
    </ligand>
</feature>
<feature type="binding site" evidence="1">
    <location>
        <position position="57"/>
    </location>
    <ligand>
        <name>substrate</name>
    </ligand>
</feature>
<feature type="binding site" evidence="1">
    <location>
        <position position="95"/>
    </location>
    <ligand>
        <name>Fe cation</name>
        <dbReference type="ChEBI" id="CHEBI:24875"/>
        <label>1</label>
        <note>catalytic</note>
    </ligand>
</feature>
<feature type="binding site" evidence="1">
    <location>
        <position position="99"/>
    </location>
    <ligand>
        <name>substrate</name>
    </ligand>
</feature>
<feature type="binding site" evidence="1">
    <location>
        <position position="110"/>
    </location>
    <ligand>
        <name>substrate</name>
    </ligand>
</feature>
<feature type="binding site" evidence="1">
    <location>
        <position position="125"/>
    </location>
    <ligand>
        <name>Fe cation</name>
        <dbReference type="ChEBI" id="CHEBI:24875"/>
        <label>2</label>
    </ligand>
</feature>
<feature type="binding site" evidence="1">
    <location>
        <position position="128"/>
    </location>
    <ligand>
        <name>Fe cation</name>
        <dbReference type="ChEBI" id="CHEBI:24875"/>
        <label>2</label>
    </ligand>
</feature>
<feature type="binding site" evidence="1">
    <location>
        <position position="162"/>
    </location>
    <ligand>
        <name>Fe cation</name>
        <dbReference type="ChEBI" id="CHEBI:24875"/>
        <label>2</label>
    </ligand>
</feature>
<feature type="binding site" evidence="1">
    <location>
        <position position="165"/>
    </location>
    <ligand>
        <name>Fe cation</name>
        <dbReference type="ChEBI" id="CHEBI:24875"/>
        <label>2</label>
    </ligand>
</feature>
<dbReference type="EC" id="1.13.11.6" evidence="1"/>
<dbReference type="EMBL" id="AM747721">
    <property type="protein sequence ID" value="CAR55988.1"/>
    <property type="molecule type" value="Genomic_DNA"/>
</dbReference>
<dbReference type="RefSeq" id="WP_006490322.1">
    <property type="nucleotide sequence ID" value="NC_011001.1"/>
</dbReference>
<dbReference type="SMR" id="B4EFS7"/>
<dbReference type="KEGG" id="bcj:BCAM2130"/>
<dbReference type="eggNOG" id="COG4101">
    <property type="taxonomic scope" value="Bacteria"/>
</dbReference>
<dbReference type="HOGENOM" id="CLU_095765_0_0_4"/>
<dbReference type="BioCyc" id="BCEN216591:G1G1V-6199-MONOMER"/>
<dbReference type="UniPathway" id="UPA00253">
    <property type="reaction ID" value="UER00330"/>
</dbReference>
<dbReference type="Proteomes" id="UP000001035">
    <property type="component" value="Chromosome 2"/>
</dbReference>
<dbReference type="GO" id="GO:0000334">
    <property type="term" value="F:3-hydroxyanthranilate 3,4-dioxygenase activity"/>
    <property type="evidence" value="ECO:0007669"/>
    <property type="project" value="UniProtKB-UniRule"/>
</dbReference>
<dbReference type="GO" id="GO:0008198">
    <property type="term" value="F:ferrous iron binding"/>
    <property type="evidence" value="ECO:0007669"/>
    <property type="project" value="UniProtKB-UniRule"/>
</dbReference>
<dbReference type="GO" id="GO:0043420">
    <property type="term" value="P:anthranilate metabolic process"/>
    <property type="evidence" value="ECO:0007669"/>
    <property type="project" value="UniProtKB-UniRule"/>
</dbReference>
<dbReference type="GO" id="GO:0006569">
    <property type="term" value="P:L-tryptophan catabolic process"/>
    <property type="evidence" value="ECO:0007669"/>
    <property type="project" value="UniProtKB-UniRule"/>
</dbReference>
<dbReference type="GO" id="GO:0009435">
    <property type="term" value="P:NAD biosynthetic process"/>
    <property type="evidence" value="ECO:0007669"/>
    <property type="project" value="UniProtKB-UniPathway"/>
</dbReference>
<dbReference type="GO" id="GO:0019805">
    <property type="term" value="P:quinolinate biosynthetic process"/>
    <property type="evidence" value="ECO:0007669"/>
    <property type="project" value="UniProtKB-UniRule"/>
</dbReference>
<dbReference type="CDD" id="cd06123">
    <property type="entry name" value="cupin_HAO"/>
    <property type="match status" value="1"/>
</dbReference>
<dbReference type="Gene3D" id="2.60.120.10">
    <property type="entry name" value="Jelly Rolls"/>
    <property type="match status" value="1"/>
</dbReference>
<dbReference type="HAMAP" id="MF_00825">
    <property type="entry name" value="3_HAO"/>
    <property type="match status" value="1"/>
</dbReference>
<dbReference type="InterPro" id="IPR010329">
    <property type="entry name" value="3hydroanth_dOase"/>
</dbReference>
<dbReference type="InterPro" id="IPR014710">
    <property type="entry name" value="RmlC-like_jellyroll"/>
</dbReference>
<dbReference type="InterPro" id="IPR011051">
    <property type="entry name" value="RmlC_Cupin_sf"/>
</dbReference>
<dbReference type="NCBIfam" id="TIGR03037">
    <property type="entry name" value="anthran_nbaC"/>
    <property type="match status" value="1"/>
</dbReference>
<dbReference type="NCBIfam" id="NF009763">
    <property type="entry name" value="PRK13264.1"/>
    <property type="match status" value="1"/>
</dbReference>
<dbReference type="PANTHER" id="PTHR15497">
    <property type="entry name" value="3-HYDROXYANTHRANILATE 3,4-DIOXYGENASE"/>
    <property type="match status" value="1"/>
</dbReference>
<dbReference type="PANTHER" id="PTHR15497:SF1">
    <property type="entry name" value="3-HYDROXYANTHRANILATE 3,4-DIOXYGENASE"/>
    <property type="match status" value="1"/>
</dbReference>
<dbReference type="Pfam" id="PF06052">
    <property type="entry name" value="3-HAO"/>
    <property type="match status" value="1"/>
</dbReference>
<dbReference type="SUPFAM" id="SSF51182">
    <property type="entry name" value="RmlC-like cupins"/>
    <property type="match status" value="1"/>
</dbReference>
<evidence type="ECO:0000255" key="1">
    <source>
        <dbReference type="HAMAP-Rule" id="MF_00825"/>
    </source>
</evidence>
<comment type="function">
    <text evidence="1">Catalyzes the oxidative ring opening of 3-hydroxyanthranilate to 2-amino-3-carboxymuconate semialdehyde, which spontaneously cyclizes to quinolinate.</text>
</comment>
<comment type="catalytic activity">
    <reaction evidence="1">
        <text>3-hydroxyanthranilate + O2 = (2Z,4Z)-2-amino-3-carboxymuconate 6-semialdehyde</text>
        <dbReference type="Rhea" id="RHEA:17953"/>
        <dbReference type="ChEBI" id="CHEBI:15379"/>
        <dbReference type="ChEBI" id="CHEBI:36559"/>
        <dbReference type="ChEBI" id="CHEBI:77612"/>
        <dbReference type="EC" id="1.13.11.6"/>
    </reaction>
</comment>
<comment type="cofactor">
    <cofactor evidence="1">
        <name>Fe(2+)</name>
        <dbReference type="ChEBI" id="CHEBI:29033"/>
    </cofactor>
    <text evidence="1">Binds 2 Fe(2+) ions per subunit.</text>
</comment>
<comment type="pathway">
    <text evidence="1">Cofactor biosynthesis; NAD(+) biosynthesis; quinolinate from L-kynurenine: step 3/3.</text>
</comment>
<comment type="subunit">
    <text evidence="1">Homodimer.</text>
</comment>
<comment type="similarity">
    <text evidence="1">Belongs to the 3-HAO family.</text>
</comment>
<accession>B4EFS7</accession>
<organism>
    <name type="scientific">Burkholderia cenocepacia (strain ATCC BAA-245 / DSM 16553 / LMG 16656 / NCTC 13227 / J2315 / CF5610)</name>
    <name type="common">Burkholderia cepacia (strain J2315)</name>
    <dbReference type="NCBI Taxonomy" id="216591"/>
    <lineage>
        <taxon>Bacteria</taxon>
        <taxon>Pseudomonadati</taxon>
        <taxon>Pseudomonadota</taxon>
        <taxon>Betaproteobacteria</taxon>
        <taxon>Burkholderiales</taxon>
        <taxon>Burkholderiaceae</taxon>
        <taxon>Burkholderia</taxon>
        <taxon>Burkholderia cepacia complex</taxon>
    </lineage>
</organism>